<protein>
    <recommendedName>
        <fullName>Probable cytochrome P450 513C1</fullName>
        <ecNumber>1.14.-.-</ecNumber>
    </recommendedName>
</protein>
<comment type="cofactor">
    <cofactor evidence="1">
        <name>heme</name>
        <dbReference type="ChEBI" id="CHEBI:30413"/>
    </cofactor>
</comment>
<comment type="subcellular location">
    <subcellularLocation>
        <location evidence="3">Membrane</location>
        <topology evidence="3">Single-pass membrane protein</topology>
    </subcellularLocation>
</comment>
<comment type="similarity">
    <text evidence="3">Belongs to the cytochrome P450 family.</text>
</comment>
<evidence type="ECO:0000250" key="1"/>
<evidence type="ECO:0000255" key="2"/>
<evidence type="ECO:0000305" key="3"/>
<gene>
    <name type="primary">cyp513C1</name>
    <name type="ORF">DDB_G0291105</name>
</gene>
<keyword id="KW-0349">Heme</keyword>
<keyword id="KW-0408">Iron</keyword>
<keyword id="KW-0472">Membrane</keyword>
<keyword id="KW-0479">Metal-binding</keyword>
<keyword id="KW-0503">Monooxygenase</keyword>
<keyword id="KW-0560">Oxidoreductase</keyword>
<keyword id="KW-1185">Reference proteome</keyword>
<keyword id="KW-0812">Transmembrane</keyword>
<keyword id="KW-1133">Transmembrane helix</keyword>
<organism>
    <name type="scientific">Dictyostelium discoideum</name>
    <name type="common">Social amoeba</name>
    <dbReference type="NCBI Taxonomy" id="44689"/>
    <lineage>
        <taxon>Eukaryota</taxon>
        <taxon>Amoebozoa</taxon>
        <taxon>Evosea</taxon>
        <taxon>Eumycetozoa</taxon>
        <taxon>Dictyostelia</taxon>
        <taxon>Dictyosteliales</taxon>
        <taxon>Dictyosteliaceae</taxon>
        <taxon>Dictyostelium</taxon>
    </lineage>
</organism>
<proteinExistence type="inferred from homology"/>
<accession>Q54F47</accession>
<name>C513C_DICDI</name>
<dbReference type="EC" id="1.14.-.-"/>
<dbReference type="EMBL" id="AAFI02000175">
    <property type="protein sequence ID" value="EAL61900.1"/>
    <property type="molecule type" value="Genomic_DNA"/>
</dbReference>
<dbReference type="RefSeq" id="XP_635407.1">
    <property type="nucleotide sequence ID" value="XM_630315.1"/>
</dbReference>
<dbReference type="SMR" id="Q54F47"/>
<dbReference type="STRING" id="44689.Q54F47"/>
<dbReference type="PaxDb" id="44689-DDB0232340"/>
<dbReference type="EnsemblProtists" id="EAL61900">
    <property type="protein sequence ID" value="EAL61900"/>
    <property type="gene ID" value="DDB_G0291105"/>
</dbReference>
<dbReference type="GeneID" id="8627991"/>
<dbReference type="KEGG" id="ddi:DDB_G0291105"/>
<dbReference type="dictyBase" id="DDB_G0291105">
    <property type="gene designation" value="cyp513C1"/>
</dbReference>
<dbReference type="VEuPathDB" id="AmoebaDB:DDB_G0291105"/>
<dbReference type="eggNOG" id="KOG0156">
    <property type="taxonomic scope" value="Eukaryota"/>
</dbReference>
<dbReference type="HOGENOM" id="CLU_001570_22_0_1"/>
<dbReference type="InParanoid" id="Q54F47"/>
<dbReference type="OMA" id="MEEGPGM"/>
<dbReference type="PhylomeDB" id="Q54F47"/>
<dbReference type="PRO" id="PR:Q54F47"/>
<dbReference type="Proteomes" id="UP000002195">
    <property type="component" value="Chromosome 5"/>
</dbReference>
<dbReference type="GO" id="GO:0016020">
    <property type="term" value="C:membrane"/>
    <property type="evidence" value="ECO:0007669"/>
    <property type="project" value="UniProtKB-SubCell"/>
</dbReference>
<dbReference type="GO" id="GO:0020037">
    <property type="term" value="F:heme binding"/>
    <property type="evidence" value="ECO:0007669"/>
    <property type="project" value="InterPro"/>
</dbReference>
<dbReference type="GO" id="GO:0005506">
    <property type="term" value="F:iron ion binding"/>
    <property type="evidence" value="ECO:0007669"/>
    <property type="project" value="InterPro"/>
</dbReference>
<dbReference type="GO" id="GO:0004497">
    <property type="term" value="F:monooxygenase activity"/>
    <property type="evidence" value="ECO:0007669"/>
    <property type="project" value="UniProtKB-KW"/>
</dbReference>
<dbReference type="GO" id="GO:0016705">
    <property type="term" value="F:oxidoreductase activity, acting on paired donors, with incorporation or reduction of molecular oxygen"/>
    <property type="evidence" value="ECO:0007669"/>
    <property type="project" value="InterPro"/>
</dbReference>
<dbReference type="CDD" id="cd20617">
    <property type="entry name" value="CYP1_2-like"/>
    <property type="match status" value="1"/>
</dbReference>
<dbReference type="Gene3D" id="1.10.630.10">
    <property type="entry name" value="Cytochrome P450"/>
    <property type="match status" value="1"/>
</dbReference>
<dbReference type="InterPro" id="IPR001128">
    <property type="entry name" value="Cyt_P450"/>
</dbReference>
<dbReference type="InterPro" id="IPR002401">
    <property type="entry name" value="Cyt_P450_E_grp-I"/>
</dbReference>
<dbReference type="InterPro" id="IPR036396">
    <property type="entry name" value="Cyt_P450_sf"/>
</dbReference>
<dbReference type="PANTHER" id="PTHR24303:SF32">
    <property type="entry name" value="CYTOCHROME P450 513C1-RELATED"/>
    <property type="match status" value="1"/>
</dbReference>
<dbReference type="PANTHER" id="PTHR24303">
    <property type="entry name" value="HEME-BINDING MONOOXYGENASE FAMILY"/>
    <property type="match status" value="1"/>
</dbReference>
<dbReference type="Pfam" id="PF00067">
    <property type="entry name" value="p450"/>
    <property type="match status" value="1"/>
</dbReference>
<dbReference type="PRINTS" id="PR00463">
    <property type="entry name" value="EP450I"/>
</dbReference>
<dbReference type="PRINTS" id="PR00385">
    <property type="entry name" value="P450"/>
</dbReference>
<dbReference type="SUPFAM" id="SSF48264">
    <property type="entry name" value="Cytochrome P450"/>
    <property type="match status" value="1"/>
</dbReference>
<sequence length="495" mass="56601">MNYLVLILVSLVSIYFLFIKNQDRKKKINSKIPGPKGFLFGNLIELARTKKNLHLKYLEWFEKYGPVFRVSIGSLETVVLTGYPILREAFIDNSDTFTSRFQRENARSINGYKGLINSNGDYHKNLKSVILSEMTATKIKKMESHINQESKRLCELLDQHAKQGTPFTMNKYLNLFSINIILRFLFGVNYPYTELDDGSSSIIQVIQQFLKLVSQPSITTYFPILSPFMNDRSKEFYDIHKLLSNHIINLIERYKDSKQHQQQEQEPIDGATEPTVTILDKLLIEVENNRITQNALISICIDVLIAGTDTVGQTLSFAIVALVNNAEIQEKLSRNIIDSMEKGDNHYSYSKYRNGIPYLALVVKEVFRMYPAGILGLPHMTSEDCEIQGHKIAKGTQIIQNIYSTHRSESFWPNPNNFIPERHIQNDVSKSVHFAVGTRNCMGMSLSEAEVHTAMAELFGNFKFTNPSNIPLNDQGTFSVALNCPDFFVKIERRN</sequence>
<reference key="1">
    <citation type="journal article" date="2005" name="Nature">
        <title>The genome of the social amoeba Dictyostelium discoideum.</title>
        <authorList>
            <person name="Eichinger L."/>
            <person name="Pachebat J.A."/>
            <person name="Gloeckner G."/>
            <person name="Rajandream M.A."/>
            <person name="Sucgang R."/>
            <person name="Berriman M."/>
            <person name="Song J."/>
            <person name="Olsen R."/>
            <person name="Szafranski K."/>
            <person name="Xu Q."/>
            <person name="Tunggal B."/>
            <person name="Kummerfeld S."/>
            <person name="Madera M."/>
            <person name="Konfortov B.A."/>
            <person name="Rivero F."/>
            <person name="Bankier A.T."/>
            <person name="Lehmann R."/>
            <person name="Hamlin N."/>
            <person name="Davies R."/>
            <person name="Gaudet P."/>
            <person name="Fey P."/>
            <person name="Pilcher K."/>
            <person name="Chen G."/>
            <person name="Saunders D."/>
            <person name="Sodergren E.J."/>
            <person name="Davis P."/>
            <person name="Kerhornou A."/>
            <person name="Nie X."/>
            <person name="Hall N."/>
            <person name="Anjard C."/>
            <person name="Hemphill L."/>
            <person name="Bason N."/>
            <person name="Farbrother P."/>
            <person name="Desany B."/>
            <person name="Just E."/>
            <person name="Morio T."/>
            <person name="Rost R."/>
            <person name="Churcher C.M."/>
            <person name="Cooper J."/>
            <person name="Haydock S."/>
            <person name="van Driessche N."/>
            <person name="Cronin A."/>
            <person name="Goodhead I."/>
            <person name="Muzny D.M."/>
            <person name="Mourier T."/>
            <person name="Pain A."/>
            <person name="Lu M."/>
            <person name="Harper D."/>
            <person name="Lindsay R."/>
            <person name="Hauser H."/>
            <person name="James K.D."/>
            <person name="Quiles M."/>
            <person name="Madan Babu M."/>
            <person name="Saito T."/>
            <person name="Buchrieser C."/>
            <person name="Wardroper A."/>
            <person name="Felder M."/>
            <person name="Thangavelu M."/>
            <person name="Johnson D."/>
            <person name="Knights A."/>
            <person name="Loulseged H."/>
            <person name="Mungall K.L."/>
            <person name="Oliver K."/>
            <person name="Price C."/>
            <person name="Quail M.A."/>
            <person name="Urushihara H."/>
            <person name="Hernandez J."/>
            <person name="Rabbinowitsch E."/>
            <person name="Steffen D."/>
            <person name="Sanders M."/>
            <person name="Ma J."/>
            <person name="Kohara Y."/>
            <person name="Sharp S."/>
            <person name="Simmonds M.N."/>
            <person name="Spiegler S."/>
            <person name="Tivey A."/>
            <person name="Sugano S."/>
            <person name="White B."/>
            <person name="Walker D."/>
            <person name="Woodward J.R."/>
            <person name="Winckler T."/>
            <person name="Tanaka Y."/>
            <person name="Shaulsky G."/>
            <person name="Schleicher M."/>
            <person name="Weinstock G.M."/>
            <person name="Rosenthal A."/>
            <person name="Cox E.C."/>
            <person name="Chisholm R.L."/>
            <person name="Gibbs R.A."/>
            <person name="Loomis W.F."/>
            <person name="Platzer M."/>
            <person name="Kay R.R."/>
            <person name="Williams J.G."/>
            <person name="Dear P.H."/>
            <person name="Noegel A.A."/>
            <person name="Barrell B.G."/>
            <person name="Kuspa A."/>
        </authorList>
    </citation>
    <scope>NUCLEOTIDE SEQUENCE [LARGE SCALE GENOMIC DNA]</scope>
    <source>
        <strain>AX4</strain>
    </source>
</reference>
<feature type="chain" id="PRO_0000318816" description="Probable cytochrome P450 513C1">
    <location>
        <begin position="1"/>
        <end position="495"/>
    </location>
</feature>
<feature type="transmembrane region" description="Helical" evidence="2">
    <location>
        <begin position="1"/>
        <end position="21"/>
    </location>
</feature>
<feature type="binding site" description="axial binding residue" evidence="1">
    <location>
        <position position="441"/>
    </location>
    <ligand>
        <name>heme</name>
        <dbReference type="ChEBI" id="CHEBI:30413"/>
    </ligand>
    <ligandPart>
        <name>Fe</name>
        <dbReference type="ChEBI" id="CHEBI:18248"/>
    </ligandPart>
</feature>